<comment type="function">
    <text evidence="1">Involved in peroxisomal proliferation.</text>
</comment>
<comment type="subcellular location">
    <subcellularLocation>
        <location evidence="1">Peroxisome membrane</location>
        <topology evidence="1">Multi-pass membrane protein</topology>
    </subcellularLocation>
</comment>
<comment type="tissue specificity">
    <text evidence="3">Expressed in seedlings, shoots, leaf sheaths and flag leaf.</text>
</comment>
<comment type="induction">
    <text evidence="3">By abscisic acid, H(2)O(2) and nitrogen deprivation. Down-regulated by salt stress.</text>
</comment>
<comment type="similarity">
    <text evidence="4">Belongs to the peroxin-11 family.</text>
</comment>
<proteinExistence type="evidence at transcript level"/>
<gene>
    <name type="primary">PEX11-4</name>
    <name type="ordered locus">Os04g0534600</name>
    <name type="ordered locus">LOC_Os04g45210</name>
    <name type="ORF">OsJ_014940</name>
    <name type="ORF">OSJNBb0020O11.14</name>
</gene>
<sequence>MSAGDTLDKLVVFLAKRDGIDKLVKTFQYVSKLAHWAAESSSPGLAGRAKNWETSAGLSRKAFRTGRFLTGLNGLRRAPGEFGALAVLANAGEMVYFFFDHFTWLSRVGVLDAWLARRMSFISAFGESVGYVFFIAMDLIMIRRGLRQERKLLREGGKDKDKEVKKIRMDRVMRLMATAANVADLVIGIADIEPNPFCNHAVTLGISGLVSAWAGWYRNWPS</sequence>
<organism>
    <name type="scientific">Oryza sativa subsp. japonica</name>
    <name type="common">Rice</name>
    <dbReference type="NCBI Taxonomy" id="39947"/>
    <lineage>
        <taxon>Eukaryota</taxon>
        <taxon>Viridiplantae</taxon>
        <taxon>Streptophyta</taxon>
        <taxon>Embryophyta</taxon>
        <taxon>Tracheophyta</taxon>
        <taxon>Spermatophyta</taxon>
        <taxon>Magnoliopsida</taxon>
        <taxon>Liliopsida</taxon>
        <taxon>Poales</taxon>
        <taxon>Poaceae</taxon>
        <taxon>BOP clade</taxon>
        <taxon>Oryzoideae</taxon>
        <taxon>Oryzeae</taxon>
        <taxon>Oryzinae</taxon>
        <taxon>Oryza</taxon>
        <taxon>Oryza sativa</taxon>
    </lineage>
</organism>
<evidence type="ECO:0000250" key="1"/>
<evidence type="ECO:0000255" key="2"/>
<evidence type="ECO:0000269" key="3">
    <source>
    </source>
</evidence>
<evidence type="ECO:0000305" key="4"/>
<reference key="1">
    <citation type="journal article" date="2002" name="Nature">
        <title>Sequence and analysis of rice chromosome 4.</title>
        <authorList>
            <person name="Feng Q."/>
            <person name="Zhang Y."/>
            <person name="Hao P."/>
            <person name="Wang S."/>
            <person name="Fu G."/>
            <person name="Huang Y."/>
            <person name="Li Y."/>
            <person name="Zhu J."/>
            <person name="Liu Y."/>
            <person name="Hu X."/>
            <person name="Jia P."/>
            <person name="Zhang Y."/>
            <person name="Zhao Q."/>
            <person name="Ying K."/>
            <person name="Yu S."/>
            <person name="Tang Y."/>
            <person name="Weng Q."/>
            <person name="Zhang L."/>
            <person name="Lu Y."/>
            <person name="Mu J."/>
            <person name="Lu Y."/>
            <person name="Zhang L.S."/>
            <person name="Yu Z."/>
            <person name="Fan D."/>
            <person name="Liu X."/>
            <person name="Lu T."/>
            <person name="Li C."/>
            <person name="Wu Y."/>
            <person name="Sun T."/>
            <person name="Lei H."/>
            <person name="Li T."/>
            <person name="Hu H."/>
            <person name="Guan J."/>
            <person name="Wu M."/>
            <person name="Zhang R."/>
            <person name="Zhou B."/>
            <person name="Chen Z."/>
            <person name="Chen L."/>
            <person name="Jin Z."/>
            <person name="Wang R."/>
            <person name="Yin H."/>
            <person name="Cai Z."/>
            <person name="Ren S."/>
            <person name="Lv G."/>
            <person name="Gu W."/>
            <person name="Zhu G."/>
            <person name="Tu Y."/>
            <person name="Jia J."/>
            <person name="Zhang Y."/>
            <person name="Chen J."/>
            <person name="Kang H."/>
            <person name="Chen X."/>
            <person name="Shao C."/>
            <person name="Sun Y."/>
            <person name="Hu Q."/>
            <person name="Zhang X."/>
            <person name="Zhang W."/>
            <person name="Wang L."/>
            <person name="Ding C."/>
            <person name="Sheng H."/>
            <person name="Gu J."/>
            <person name="Chen S."/>
            <person name="Ni L."/>
            <person name="Zhu F."/>
            <person name="Chen W."/>
            <person name="Lan L."/>
            <person name="Lai Y."/>
            <person name="Cheng Z."/>
            <person name="Gu M."/>
            <person name="Jiang J."/>
            <person name="Li J."/>
            <person name="Hong G."/>
            <person name="Xue Y."/>
            <person name="Han B."/>
        </authorList>
    </citation>
    <scope>NUCLEOTIDE SEQUENCE [LARGE SCALE GENOMIC DNA]</scope>
    <source>
        <strain>cv. Nipponbare</strain>
    </source>
</reference>
<reference key="2">
    <citation type="journal article" date="2005" name="Nature">
        <title>The map-based sequence of the rice genome.</title>
        <authorList>
            <consortium name="International rice genome sequencing project (IRGSP)"/>
        </authorList>
    </citation>
    <scope>NUCLEOTIDE SEQUENCE [LARGE SCALE GENOMIC DNA]</scope>
    <source>
        <strain>cv. Nipponbare</strain>
    </source>
</reference>
<reference key="3">
    <citation type="journal article" date="2008" name="Nucleic Acids Res.">
        <title>The rice annotation project database (RAP-DB): 2008 update.</title>
        <authorList>
            <consortium name="The rice annotation project (RAP)"/>
        </authorList>
    </citation>
    <scope>GENOME REANNOTATION</scope>
    <source>
        <strain>cv. Nipponbare</strain>
    </source>
</reference>
<reference key="4">
    <citation type="journal article" date="2013" name="Rice">
        <title>Improvement of the Oryza sativa Nipponbare reference genome using next generation sequence and optical map data.</title>
        <authorList>
            <person name="Kawahara Y."/>
            <person name="de la Bastide M."/>
            <person name="Hamilton J.P."/>
            <person name="Kanamori H."/>
            <person name="McCombie W.R."/>
            <person name="Ouyang S."/>
            <person name="Schwartz D.C."/>
            <person name="Tanaka T."/>
            <person name="Wu J."/>
            <person name="Zhou S."/>
            <person name="Childs K.L."/>
            <person name="Davidson R.M."/>
            <person name="Lin H."/>
            <person name="Quesada-Ocampo L."/>
            <person name="Vaillancourt B."/>
            <person name="Sakai H."/>
            <person name="Lee S.S."/>
            <person name="Kim J."/>
            <person name="Numa H."/>
            <person name="Itoh T."/>
            <person name="Buell C.R."/>
            <person name="Matsumoto T."/>
        </authorList>
    </citation>
    <scope>GENOME REANNOTATION</scope>
    <source>
        <strain>cv. Nipponbare</strain>
    </source>
</reference>
<reference key="5">
    <citation type="journal article" date="2005" name="PLoS Biol.">
        <title>The genomes of Oryza sativa: a history of duplications.</title>
        <authorList>
            <person name="Yu J."/>
            <person name="Wang J."/>
            <person name="Lin W."/>
            <person name="Li S."/>
            <person name="Li H."/>
            <person name="Zhou J."/>
            <person name="Ni P."/>
            <person name="Dong W."/>
            <person name="Hu S."/>
            <person name="Zeng C."/>
            <person name="Zhang J."/>
            <person name="Zhang Y."/>
            <person name="Li R."/>
            <person name="Xu Z."/>
            <person name="Li S."/>
            <person name="Li X."/>
            <person name="Zheng H."/>
            <person name="Cong L."/>
            <person name="Lin L."/>
            <person name="Yin J."/>
            <person name="Geng J."/>
            <person name="Li G."/>
            <person name="Shi J."/>
            <person name="Liu J."/>
            <person name="Lv H."/>
            <person name="Li J."/>
            <person name="Wang J."/>
            <person name="Deng Y."/>
            <person name="Ran L."/>
            <person name="Shi X."/>
            <person name="Wang X."/>
            <person name="Wu Q."/>
            <person name="Li C."/>
            <person name="Ren X."/>
            <person name="Wang J."/>
            <person name="Wang X."/>
            <person name="Li D."/>
            <person name="Liu D."/>
            <person name="Zhang X."/>
            <person name="Ji Z."/>
            <person name="Zhao W."/>
            <person name="Sun Y."/>
            <person name="Zhang Z."/>
            <person name="Bao J."/>
            <person name="Han Y."/>
            <person name="Dong L."/>
            <person name="Ji J."/>
            <person name="Chen P."/>
            <person name="Wu S."/>
            <person name="Liu J."/>
            <person name="Xiao Y."/>
            <person name="Bu D."/>
            <person name="Tan J."/>
            <person name="Yang L."/>
            <person name="Ye C."/>
            <person name="Zhang J."/>
            <person name="Xu J."/>
            <person name="Zhou Y."/>
            <person name="Yu Y."/>
            <person name="Zhang B."/>
            <person name="Zhuang S."/>
            <person name="Wei H."/>
            <person name="Liu B."/>
            <person name="Lei M."/>
            <person name="Yu H."/>
            <person name="Li Y."/>
            <person name="Xu H."/>
            <person name="Wei S."/>
            <person name="He X."/>
            <person name="Fang L."/>
            <person name="Zhang Z."/>
            <person name="Zhang Y."/>
            <person name="Huang X."/>
            <person name="Su Z."/>
            <person name="Tong W."/>
            <person name="Li J."/>
            <person name="Tong Z."/>
            <person name="Li S."/>
            <person name="Ye J."/>
            <person name="Wang L."/>
            <person name="Fang L."/>
            <person name="Lei T."/>
            <person name="Chen C.-S."/>
            <person name="Chen H.-C."/>
            <person name="Xu Z."/>
            <person name="Li H."/>
            <person name="Huang H."/>
            <person name="Zhang F."/>
            <person name="Xu H."/>
            <person name="Li N."/>
            <person name="Zhao C."/>
            <person name="Li S."/>
            <person name="Dong L."/>
            <person name="Huang Y."/>
            <person name="Li L."/>
            <person name="Xi Y."/>
            <person name="Qi Q."/>
            <person name="Li W."/>
            <person name="Zhang B."/>
            <person name="Hu W."/>
            <person name="Zhang Y."/>
            <person name="Tian X."/>
            <person name="Jiao Y."/>
            <person name="Liang X."/>
            <person name="Jin J."/>
            <person name="Gao L."/>
            <person name="Zheng W."/>
            <person name="Hao B."/>
            <person name="Liu S.-M."/>
            <person name="Wang W."/>
            <person name="Yuan L."/>
            <person name="Cao M."/>
            <person name="McDermott J."/>
            <person name="Samudrala R."/>
            <person name="Wang J."/>
            <person name="Wong G.K.-S."/>
            <person name="Yang H."/>
        </authorList>
    </citation>
    <scope>NUCLEOTIDE SEQUENCE [LARGE SCALE GENOMIC DNA]</scope>
    <source>
        <strain>cv. Nipponbare</strain>
    </source>
</reference>
<reference key="6">
    <citation type="journal article" date="2003" name="Science">
        <title>Collection, mapping, and annotation of over 28,000 cDNA clones from japonica rice.</title>
        <authorList>
            <consortium name="The rice full-length cDNA consortium"/>
        </authorList>
    </citation>
    <scope>NUCLEOTIDE SEQUENCE [LARGE SCALE MRNA]</scope>
    <source>
        <strain>cv. Nipponbare</strain>
    </source>
</reference>
<reference key="7">
    <citation type="journal article" date="2008" name="Gene">
        <title>Comprehensive sequence and expression profile analysis of PEX11 gene family in rice.</title>
        <authorList>
            <person name="Nayidu N.K."/>
            <person name="Wang L."/>
            <person name="Xie W."/>
            <person name="Zhang C."/>
            <person name="Fan C."/>
            <person name="Lian X."/>
            <person name="Zhang Q."/>
            <person name="Xiong L."/>
        </authorList>
    </citation>
    <scope>TISSUE SPECIFICITY</scope>
    <scope>INDUCTION</scope>
    <scope>GENE FAMILY</scope>
    <scope>NOMENCLATURE</scope>
</reference>
<protein>
    <recommendedName>
        <fullName>Peroxisomal membrane protein 11-4</fullName>
    </recommendedName>
    <alternativeName>
        <fullName>OsPEX11-4</fullName>
    </alternativeName>
    <alternativeName>
        <fullName>Peroxin-11-4</fullName>
    </alternativeName>
</protein>
<keyword id="KW-0472">Membrane</keyword>
<keyword id="KW-0576">Peroxisome</keyword>
<keyword id="KW-0962">Peroxisome biogenesis</keyword>
<keyword id="KW-1185">Reference proteome</keyword>
<keyword id="KW-0812">Transmembrane</keyword>
<keyword id="KW-1133">Transmembrane helix</keyword>
<dbReference type="EMBL" id="AL662998">
    <property type="protein sequence ID" value="CAD41517.3"/>
    <property type="molecule type" value="Genomic_DNA"/>
</dbReference>
<dbReference type="EMBL" id="AP008210">
    <property type="protein sequence ID" value="BAF15332.1"/>
    <property type="molecule type" value="Genomic_DNA"/>
</dbReference>
<dbReference type="EMBL" id="AP014960">
    <property type="protein sequence ID" value="BAS90248.1"/>
    <property type="molecule type" value="Genomic_DNA"/>
</dbReference>
<dbReference type="EMBL" id="CM000141">
    <property type="protein sequence ID" value="EAZ31457.1"/>
    <property type="molecule type" value="Genomic_DNA"/>
</dbReference>
<dbReference type="EMBL" id="AK073835">
    <property type="protein sequence ID" value="BAG93668.1"/>
    <property type="molecule type" value="mRNA"/>
</dbReference>
<dbReference type="RefSeq" id="XP_015634264.1">
    <property type="nucleotide sequence ID" value="XM_015778778.1"/>
</dbReference>
<dbReference type="FunCoup" id="Q7XU74">
    <property type="interactions" value="113"/>
</dbReference>
<dbReference type="STRING" id="39947.Q7XU74"/>
<dbReference type="PaxDb" id="39947-Q7XU74"/>
<dbReference type="EnsemblPlants" id="Os04t0534600-01">
    <property type="protein sequence ID" value="Os04t0534600-01"/>
    <property type="gene ID" value="Os04g0534600"/>
</dbReference>
<dbReference type="Gramene" id="Os04t0534600-01">
    <property type="protein sequence ID" value="Os04t0534600-01"/>
    <property type="gene ID" value="Os04g0534600"/>
</dbReference>
<dbReference type="KEGG" id="dosa:Os04g0534600"/>
<dbReference type="eggNOG" id="KOG4186">
    <property type="taxonomic scope" value="Eukaryota"/>
</dbReference>
<dbReference type="HOGENOM" id="CLU_080291_0_0_1"/>
<dbReference type="InParanoid" id="Q7XU74"/>
<dbReference type="OMA" id="LVHWHVE"/>
<dbReference type="OrthoDB" id="411017at2759"/>
<dbReference type="Proteomes" id="UP000000763">
    <property type="component" value="Chromosome 4"/>
</dbReference>
<dbReference type="Proteomes" id="UP000007752">
    <property type="component" value="Chromosome 4"/>
</dbReference>
<dbReference type="Proteomes" id="UP000059680">
    <property type="component" value="Chromosome 4"/>
</dbReference>
<dbReference type="GO" id="GO:0005778">
    <property type="term" value="C:peroxisomal membrane"/>
    <property type="evidence" value="ECO:0000318"/>
    <property type="project" value="GO_Central"/>
</dbReference>
<dbReference type="GO" id="GO:0042802">
    <property type="term" value="F:identical protein binding"/>
    <property type="evidence" value="ECO:0007669"/>
    <property type="project" value="EnsemblPlants"/>
</dbReference>
<dbReference type="GO" id="GO:0016559">
    <property type="term" value="P:peroxisome fission"/>
    <property type="evidence" value="ECO:0000318"/>
    <property type="project" value="GO_Central"/>
</dbReference>
<dbReference type="GO" id="GO:0044375">
    <property type="term" value="P:regulation of peroxisome size"/>
    <property type="evidence" value="ECO:0007669"/>
    <property type="project" value="EnsemblPlants"/>
</dbReference>
<dbReference type="InterPro" id="IPR008733">
    <property type="entry name" value="PEX11"/>
</dbReference>
<dbReference type="PANTHER" id="PTHR12652">
    <property type="entry name" value="PEROXISOMAL BIOGENESIS FACTOR 11"/>
    <property type="match status" value="1"/>
</dbReference>
<dbReference type="PANTHER" id="PTHR12652:SF17">
    <property type="entry name" value="PEROXISOMAL MEMBRANE PROTEIN 11B"/>
    <property type="match status" value="1"/>
</dbReference>
<dbReference type="Pfam" id="PF05648">
    <property type="entry name" value="PEX11"/>
    <property type="match status" value="1"/>
</dbReference>
<accession>Q7XU74</accession>
<accession>A3AVW8</accession>
<accession>B7EMS1</accession>
<name>PX114_ORYSJ</name>
<feature type="chain" id="PRO_0000330305" description="Peroxisomal membrane protein 11-4">
    <location>
        <begin position="1"/>
        <end position="222"/>
    </location>
</feature>
<feature type="topological domain" description="Cytoplasmic" evidence="2">
    <location>
        <begin position="1"/>
        <end position="81"/>
    </location>
</feature>
<feature type="transmembrane region" description="Helical" evidence="2">
    <location>
        <begin position="82"/>
        <end position="102"/>
    </location>
</feature>
<feature type="topological domain" description="Lumenal" evidence="2">
    <location>
        <begin position="103"/>
        <end position="196"/>
    </location>
</feature>
<feature type="transmembrane region" description="Helical" evidence="2">
    <location>
        <begin position="197"/>
        <end position="217"/>
    </location>
</feature>
<feature type="topological domain" description="Cytoplasmic" evidence="2">
    <location>
        <begin position="218"/>
        <end position="222"/>
    </location>
</feature>
<feature type="sequence conflict" description="In Ref. 5; EAZ31457." evidence="4" ref="5">
    <original>F</original>
    <variation>L</variation>
    <location>
        <position position="97"/>
    </location>
</feature>